<accession>A5EUT7</accession>
<comment type="function">
    <text evidence="1">Na(+)/H(+) antiporter that extrudes sodium in exchange for external protons.</text>
</comment>
<comment type="catalytic activity">
    <reaction evidence="1">
        <text>Na(+)(in) + 2 H(+)(out) = Na(+)(out) + 2 H(+)(in)</text>
        <dbReference type="Rhea" id="RHEA:29251"/>
        <dbReference type="ChEBI" id="CHEBI:15378"/>
        <dbReference type="ChEBI" id="CHEBI:29101"/>
    </reaction>
    <physiologicalReaction direction="left-to-right" evidence="1">
        <dbReference type="Rhea" id="RHEA:29252"/>
    </physiologicalReaction>
</comment>
<comment type="subcellular location">
    <subcellularLocation>
        <location evidence="1">Cell inner membrane</location>
        <topology evidence="1">Multi-pass membrane protein</topology>
    </subcellularLocation>
</comment>
<comment type="similarity">
    <text evidence="1">Belongs to the NhaA Na(+)/H(+) (TC 2.A.33) antiporter family.</text>
</comment>
<organism>
    <name type="scientific">Dichelobacter nodosus (strain VCS1703A)</name>
    <dbReference type="NCBI Taxonomy" id="246195"/>
    <lineage>
        <taxon>Bacteria</taxon>
        <taxon>Pseudomonadati</taxon>
        <taxon>Pseudomonadota</taxon>
        <taxon>Gammaproteobacteria</taxon>
        <taxon>Cardiobacteriales</taxon>
        <taxon>Cardiobacteriaceae</taxon>
        <taxon>Dichelobacter</taxon>
    </lineage>
</organism>
<gene>
    <name evidence="1" type="primary">nhaA</name>
    <name type="ordered locus">DNO_0816</name>
</gene>
<reference key="1">
    <citation type="journal article" date="2007" name="Nat. Biotechnol.">
        <title>Genome sequence and identification of candidate vaccine antigens from the animal pathogen Dichelobacter nodosus.</title>
        <authorList>
            <person name="Myers G.S.A."/>
            <person name="Parker D."/>
            <person name="Al-Hasani K."/>
            <person name="Kennan R.M."/>
            <person name="Seemann T."/>
            <person name="Ren Q."/>
            <person name="Badger J.H."/>
            <person name="Selengut J.D."/>
            <person name="Deboy R.T."/>
            <person name="Tettelin H."/>
            <person name="Boyce J.D."/>
            <person name="McCarl V.P."/>
            <person name="Han X."/>
            <person name="Nelson W.C."/>
            <person name="Madupu R."/>
            <person name="Mohamoud Y."/>
            <person name="Holley T."/>
            <person name="Fedorova N."/>
            <person name="Khouri H."/>
            <person name="Bottomley S.P."/>
            <person name="Whittington R.J."/>
            <person name="Adler B."/>
            <person name="Songer J.G."/>
            <person name="Rood J.I."/>
            <person name="Paulsen I.T."/>
        </authorList>
    </citation>
    <scope>NUCLEOTIDE SEQUENCE [LARGE SCALE GENOMIC DNA]</scope>
    <source>
        <strain>VCS1703A</strain>
    </source>
</reference>
<name>NHAA_DICNV</name>
<evidence type="ECO:0000255" key="1">
    <source>
        <dbReference type="HAMAP-Rule" id="MF_01844"/>
    </source>
</evidence>
<keyword id="KW-0050">Antiport</keyword>
<keyword id="KW-0997">Cell inner membrane</keyword>
<keyword id="KW-1003">Cell membrane</keyword>
<keyword id="KW-0406">Ion transport</keyword>
<keyword id="KW-0472">Membrane</keyword>
<keyword id="KW-1185">Reference proteome</keyword>
<keyword id="KW-0915">Sodium</keyword>
<keyword id="KW-0739">Sodium transport</keyword>
<keyword id="KW-0812">Transmembrane</keyword>
<keyword id="KW-1133">Transmembrane helix</keyword>
<keyword id="KW-0813">Transport</keyword>
<feature type="chain" id="PRO_0000334278" description="Na(+)/H(+) antiporter NhaA">
    <location>
        <begin position="1"/>
        <end position="464"/>
    </location>
</feature>
<feature type="transmembrane region" description="Helical" evidence="1">
    <location>
        <begin position="37"/>
        <end position="57"/>
    </location>
</feature>
<feature type="transmembrane region" description="Helical" evidence="1">
    <location>
        <begin position="82"/>
        <end position="102"/>
    </location>
</feature>
<feature type="transmembrane region" description="Helical" evidence="1">
    <location>
        <begin position="118"/>
        <end position="138"/>
    </location>
</feature>
<feature type="transmembrane region" description="Helical" evidence="1">
    <location>
        <begin position="145"/>
        <end position="165"/>
    </location>
</feature>
<feature type="transmembrane region" description="Helical" evidence="1">
    <location>
        <begin position="176"/>
        <end position="196"/>
    </location>
</feature>
<feature type="transmembrane region" description="Helical" evidence="1">
    <location>
        <begin position="200"/>
        <end position="220"/>
    </location>
</feature>
<feature type="transmembrane region" description="Helical" evidence="1">
    <location>
        <begin position="226"/>
        <end position="246"/>
    </location>
</feature>
<feature type="transmembrane region" description="Helical" evidence="1">
    <location>
        <begin position="248"/>
        <end position="268"/>
    </location>
</feature>
<feature type="transmembrane region" description="Helical" evidence="1">
    <location>
        <begin position="321"/>
        <end position="341"/>
    </location>
</feature>
<feature type="transmembrane region" description="Helical" evidence="1">
    <location>
        <begin position="360"/>
        <end position="380"/>
    </location>
</feature>
<feature type="transmembrane region" description="Helical" evidence="1">
    <location>
        <begin position="396"/>
        <end position="416"/>
    </location>
</feature>
<feature type="transmembrane region" description="Helical" evidence="1">
    <location>
        <begin position="430"/>
        <end position="450"/>
    </location>
</feature>
<sequence>MSYFTREKHELTAATPWEKTVAKMLSPFNRFMNSANGSGILLVFLTIVALVFANTSCREWYERVLNQQLLVQMGSFKIDMTIHYWINDALMTLFFLMVGLEIKYEMKVGRLASLKRAVLPIFAALGGMIVPALIYFSFNSQGETVSGWGIPMATDIAFAIAILLLLKGKVSPSLTAVLVALAIVDDLGAVIVIAIFYTDNLAWSPLIAAFLCFAVLLLLNRGGIRALWAYIAIGSLMWVFMLFSGVHATVAGVLTALATPMNAVYSPTEFSTQARQLLDEFDAHPDSKTQVAHSRELNDLLQQLSTGIQKTQTPLQRLEHILNTPVYFLIVPLFVLFNAGVHVELNNLNALLHSPVLKGVFFGLVFGKLIGVVSAIMICVKLKIAALPADATFKQVLGIGMLAGIGFTMSIFVSELAFSGQAQHLAEAKITILAASLTAATLGYCWLRFITGAAKAETGTSVSQ</sequence>
<dbReference type="EMBL" id="CP000513">
    <property type="protein sequence ID" value="ABQ13954.1"/>
    <property type="molecule type" value="Genomic_DNA"/>
</dbReference>
<dbReference type="RefSeq" id="WP_012031139.1">
    <property type="nucleotide sequence ID" value="NC_009446.1"/>
</dbReference>
<dbReference type="SMR" id="A5EUT7"/>
<dbReference type="STRING" id="246195.DNO_0816"/>
<dbReference type="KEGG" id="dno:DNO_0816"/>
<dbReference type="eggNOG" id="COG3004">
    <property type="taxonomic scope" value="Bacteria"/>
</dbReference>
<dbReference type="HOGENOM" id="CLU_015803_1_2_6"/>
<dbReference type="OrthoDB" id="9808135at2"/>
<dbReference type="Proteomes" id="UP000000248">
    <property type="component" value="Chromosome"/>
</dbReference>
<dbReference type="GO" id="GO:0005886">
    <property type="term" value="C:plasma membrane"/>
    <property type="evidence" value="ECO:0007669"/>
    <property type="project" value="UniProtKB-SubCell"/>
</dbReference>
<dbReference type="GO" id="GO:0015385">
    <property type="term" value="F:sodium:proton antiporter activity"/>
    <property type="evidence" value="ECO:0007669"/>
    <property type="project" value="TreeGrafter"/>
</dbReference>
<dbReference type="GO" id="GO:0006885">
    <property type="term" value="P:regulation of pH"/>
    <property type="evidence" value="ECO:0007669"/>
    <property type="project" value="InterPro"/>
</dbReference>
<dbReference type="Gene3D" id="1.20.1530.10">
    <property type="entry name" value="Na+/H+ antiporter like domain"/>
    <property type="match status" value="1"/>
</dbReference>
<dbReference type="HAMAP" id="MF_01844">
    <property type="entry name" value="NhaA"/>
    <property type="match status" value="1"/>
</dbReference>
<dbReference type="InterPro" id="IPR023171">
    <property type="entry name" value="Na/H_antiporter_dom_sf"/>
</dbReference>
<dbReference type="InterPro" id="IPR004670">
    <property type="entry name" value="NhaA"/>
</dbReference>
<dbReference type="NCBIfam" id="TIGR00773">
    <property type="entry name" value="NhaA"/>
    <property type="match status" value="1"/>
</dbReference>
<dbReference type="PANTHER" id="PTHR30341:SF0">
    <property type="entry name" value="NA(+)_H(+) ANTIPORTER NHAA"/>
    <property type="match status" value="1"/>
</dbReference>
<dbReference type="PANTHER" id="PTHR30341">
    <property type="entry name" value="SODIUM ION/PROTON ANTIPORTER NHAA-RELATED"/>
    <property type="match status" value="1"/>
</dbReference>
<dbReference type="Pfam" id="PF06965">
    <property type="entry name" value="Na_H_antiport_1"/>
    <property type="match status" value="1"/>
</dbReference>
<proteinExistence type="inferred from homology"/>
<protein>
    <recommendedName>
        <fullName evidence="1">Na(+)/H(+) antiporter NhaA</fullName>
    </recommendedName>
    <alternativeName>
        <fullName evidence="1">Sodium/proton antiporter NhaA</fullName>
    </alternativeName>
</protein>